<keyword id="KW-0002">3D-structure</keyword>
<keyword id="KW-0460">Magnesium</keyword>
<keyword id="KW-0474">Menaquinone biosynthesis</keyword>
<keyword id="KW-0479">Metal-binding</keyword>
<keyword id="KW-0808">Transferase</keyword>
<evidence type="ECO:0000250" key="1"/>
<evidence type="ECO:0000250" key="2">
    <source>
        <dbReference type="UniProtKB" id="P14324"/>
    </source>
</evidence>
<evidence type="ECO:0000250" key="3">
    <source>
        <dbReference type="UniProtKB" id="Q12051"/>
    </source>
</evidence>
<evidence type="ECO:0000269" key="4">
    <source>
    </source>
</evidence>
<evidence type="ECO:0000269" key="5">
    <source>
    </source>
</evidence>
<evidence type="ECO:0000269" key="6">
    <source>
    </source>
</evidence>
<evidence type="ECO:0000269" key="7">
    <source>
    </source>
</evidence>
<evidence type="ECO:0000305" key="8"/>
<evidence type="ECO:0007744" key="9">
    <source>
        <dbReference type="PDB" id="3AQB"/>
    </source>
</evidence>
<evidence type="ECO:0007829" key="10">
    <source>
        <dbReference type="PDB" id="3AQB"/>
    </source>
</evidence>
<evidence type="ECO:0007829" key="11">
    <source>
        <dbReference type="PDB" id="3AQC"/>
    </source>
</evidence>
<dbReference type="EC" id="2.5.1.83"/>
<dbReference type="EMBL" id="AB003188">
    <property type="protein sequence ID" value="BAA25268.1"/>
    <property type="molecule type" value="Genomic_DNA"/>
</dbReference>
<dbReference type="PDB" id="3AQB">
    <property type="method" value="X-ray"/>
    <property type="resolution" value="2.40 A"/>
    <property type="chains" value="B/D=1-325"/>
</dbReference>
<dbReference type="PDB" id="3AQC">
    <property type="method" value="X-ray"/>
    <property type="resolution" value="2.61 A"/>
    <property type="chains" value="B/D=1-325"/>
</dbReference>
<dbReference type="PDBsum" id="3AQB"/>
<dbReference type="PDBsum" id="3AQC"/>
<dbReference type="SMR" id="O66129"/>
<dbReference type="KEGG" id="ag:BAA25268"/>
<dbReference type="BioCyc" id="MetaCyc:MONOMER-13829"/>
<dbReference type="BRENDA" id="2.5.1.83">
    <property type="organism ID" value="3348"/>
</dbReference>
<dbReference type="EvolutionaryTrace" id="O66129"/>
<dbReference type="GO" id="GO:0036423">
    <property type="term" value="F:hexaprenyl-diphosphate synthase ((2E,6E)-farnesyl-diphosphate specific) activity"/>
    <property type="evidence" value="ECO:0007669"/>
    <property type="project" value="UniProtKB-EC"/>
</dbReference>
<dbReference type="GO" id="GO:0000287">
    <property type="term" value="F:magnesium ion binding"/>
    <property type="evidence" value="ECO:0000314"/>
    <property type="project" value="UniProtKB"/>
</dbReference>
<dbReference type="GO" id="GO:0016765">
    <property type="term" value="F:transferase activity, transferring alkyl or aryl (other than methyl) groups"/>
    <property type="evidence" value="ECO:0000314"/>
    <property type="project" value="UniProtKB"/>
</dbReference>
<dbReference type="GO" id="GO:0008299">
    <property type="term" value="P:isoprenoid biosynthetic process"/>
    <property type="evidence" value="ECO:0007669"/>
    <property type="project" value="InterPro"/>
</dbReference>
<dbReference type="GO" id="GO:0009234">
    <property type="term" value="P:menaquinone biosynthetic process"/>
    <property type="evidence" value="ECO:0007669"/>
    <property type="project" value="UniProtKB-KW"/>
</dbReference>
<dbReference type="CDD" id="cd00685">
    <property type="entry name" value="Trans_IPPS_HT"/>
    <property type="match status" value="1"/>
</dbReference>
<dbReference type="FunFam" id="1.10.600.10:FF:000014">
    <property type="entry name" value="Heptaprenyl diphosphate synthase component II"/>
    <property type="match status" value="1"/>
</dbReference>
<dbReference type="Gene3D" id="1.10.600.10">
    <property type="entry name" value="Farnesyl Diphosphate Synthase"/>
    <property type="match status" value="1"/>
</dbReference>
<dbReference type="InterPro" id="IPR054985">
    <property type="entry name" value="HxpDPsynlarge"/>
</dbReference>
<dbReference type="InterPro" id="IPR008949">
    <property type="entry name" value="Isoprenoid_synthase_dom_sf"/>
</dbReference>
<dbReference type="InterPro" id="IPR000092">
    <property type="entry name" value="Polyprenyl_synt"/>
</dbReference>
<dbReference type="InterPro" id="IPR033749">
    <property type="entry name" value="Polyprenyl_synt_CS"/>
</dbReference>
<dbReference type="NCBIfam" id="NF045628">
    <property type="entry name" value="HxpDPsynlarge"/>
    <property type="match status" value="1"/>
</dbReference>
<dbReference type="PANTHER" id="PTHR12001:SF69">
    <property type="entry name" value="ALL TRANS-POLYPRENYL-DIPHOSPHATE SYNTHASE PDSS1"/>
    <property type="match status" value="1"/>
</dbReference>
<dbReference type="PANTHER" id="PTHR12001">
    <property type="entry name" value="GERANYLGERANYL PYROPHOSPHATE SYNTHASE"/>
    <property type="match status" value="1"/>
</dbReference>
<dbReference type="Pfam" id="PF00348">
    <property type="entry name" value="polyprenyl_synt"/>
    <property type="match status" value="1"/>
</dbReference>
<dbReference type="SFLD" id="SFLDS00005">
    <property type="entry name" value="Isoprenoid_Synthase_Type_I"/>
    <property type="match status" value="1"/>
</dbReference>
<dbReference type="SUPFAM" id="SSF48576">
    <property type="entry name" value="Terpenoid synthases"/>
    <property type="match status" value="1"/>
</dbReference>
<dbReference type="PROSITE" id="PS00723">
    <property type="entry name" value="POLYPRENYL_SYNTHASE_1"/>
    <property type="match status" value="1"/>
</dbReference>
<dbReference type="PROSITE" id="PS00444">
    <property type="entry name" value="POLYPRENYL_SYNTHASE_2"/>
    <property type="match status" value="1"/>
</dbReference>
<accession>O66129</accession>
<reference key="1">
    <citation type="journal article" date="1998" name="J. Bacteriol.">
        <title>Molecular cloning, expression, and characterization of the genes encoding the two essential protein components of Micrococcus luteus B-P 26 hexaprenyl diphosphate synthase.</title>
        <authorList>
            <person name="Shimizu N."/>
            <person name="Koyama T."/>
            <person name="Ogura K."/>
        </authorList>
    </citation>
    <scope>NUCLEOTIDE SEQUENCE [GENOMIC DNA]</scope>
    <scope>FUNCTION AS A HEXAPRENYL-DIPHOSPHATE SYNTHASE</scope>
    <scope>CATALYTIC ACTIVITY</scope>
    <scope>NOMENCLATURE</scope>
    <source>
        <strain>B-P 26</strain>
    </source>
</reference>
<reference key="2">
    <citation type="journal article" date="1982" name="J. Biol. Chem.">
        <title>Hexaprenyl pyrophosphate synthetase from Micrococcus luteus B-P 26. Separation of two essential components.</title>
        <authorList>
            <person name="Fujii H."/>
            <person name="Koyama T."/>
            <person name="Ogura K."/>
        </authorList>
    </citation>
    <scope>FUNCTION AS A HEXAPRENYL-DIPHOSPHATE SYNTHASE</scope>
</reference>
<reference key="3">
    <citation type="journal article" date="2001" name="Bioorg. Med. Chem. Lett.">
        <title>Artificial substrates of medium-chain elongating enzymes, hexaprenyl- and heptaprenyl diphosphate synthases.</title>
        <authorList>
            <person name="Nagaki M."/>
            <person name="Kimura K."/>
            <person name="Kimura H."/>
            <person name="Maki Y."/>
            <person name="Goto E."/>
            <person name="Nishino T."/>
            <person name="Koyama T."/>
        </authorList>
    </citation>
    <scope>FUNCTION AS A HEXAPRENYL-DIPHOSPHATE SYNTHASE</scope>
    <source>
        <strain>B-P 26</strain>
    </source>
</reference>
<reference key="4">
    <citation type="journal article" date="2011" name="J. Biol. Chem.">
        <title>Crystal structure of heterodimeric hexaprenyl diphosphate synthase from Micrococcus luteus B-P 26 reveals that the small subunit is directly involved in the product chain length regulation.</title>
        <authorList>
            <person name="Sasaki D."/>
            <person name="Fujihashi M."/>
            <person name="Okuyama N."/>
            <person name="Kobayashi Y."/>
            <person name="Noike M."/>
            <person name="Koyama T."/>
            <person name="Miki K."/>
        </authorList>
    </citation>
    <scope>X-RAY CRYSTALLOGRAPHY (2.40 ANGSTROMS) IN COMPLEX WITH SUBSTRATE ANALOGS AND MAGNESIUM IONS</scope>
    <scope>REACTION MECHANISM</scope>
    <scope>SUBUNIT</scope>
    <source>
        <strain>B-P 26</strain>
    </source>
</reference>
<sequence>MIALSYKAFLNPYIIEVEKRLYECIQSDSETINKAAHHILSSGGKRVRPMFVLLSGFLNDTQKDDLIRTAVSLELVHMASLVHDDYIDNSDMRRGNTSVHIAFDKDTAIRTGHFLLARALQNIATINNSKFHQIFSKTILEVCFGEFDQMADRFNYPVSFTAYLRRINRKTAILIEASCHLGALSSQLDEQSTYHIKQFGHCIGMSYQIIDDILDYTSDEATLGKPVGSDIRNGHITYPLMAAIANLKEQDDDKLEAVVKHLTSTSDDEVYQYIVSQVKQYGIEPAELLSRKYGDKAKYHLSQLQDSNIKDYLEEIHEKMLKRVY</sequence>
<gene>
    <name type="primary">hexs-b</name>
</gene>
<proteinExistence type="evidence at protein level"/>
<name>HEXB_MICLU</name>
<comment type="function">
    <text evidence="4 6 7">Catalyzes the condensation of three molecules of isopentenyl diphosphate with farnesyl diphosphate (FPP) to yield (all-E)-hexaprenyl diphosphate (HexPP; C30), the precursor of the prenyl side chain of menaquinone-6. Large subunit Hexs-B catalyzes the condensation reaction and the final product chain length is cooperatively regulated by both the Hexs-A and Hexs-B subunits using the whole size of the hydrophobic cleft as a ruler.</text>
</comment>
<comment type="catalytic activity">
    <reaction evidence="7">
        <text>3 isopentenyl diphosphate + (2E,6E)-farnesyl diphosphate = all-trans-hexaprenyl diphosphate + 3 diphosphate</text>
        <dbReference type="Rhea" id="RHEA:27559"/>
        <dbReference type="ChEBI" id="CHEBI:33019"/>
        <dbReference type="ChEBI" id="CHEBI:58179"/>
        <dbReference type="ChEBI" id="CHEBI:128769"/>
        <dbReference type="ChEBI" id="CHEBI:175763"/>
        <dbReference type="EC" id="2.5.1.83"/>
    </reaction>
</comment>
<comment type="cofactor">
    <cofactor evidence="1">
        <name>Mg(2+)</name>
        <dbReference type="ChEBI" id="CHEBI:18420"/>
    </cofactor>
    <text evidence="1">Binds 2 Mg(2+) ions per subunit.</text>
</comment>
<comment type="subunit">
    <text evidence="5">Dimer of heterodimer or heterotetramer composed of a small (Hexs-a) and large (Hexs-B) subunit.</text>
</comment>
<comment type="similarity">
    <text evidence="8">Belongs to the FPP/GGPP synthase family.</text>
</comment>
<organism>
    <name type="scientific">Micrococcus luteus</name>
    <name type="common">Micrococcus lysodeikticus</name>
    <dbReference type="NCBI Taxonomy" id="1270"/>
    <lineage>
        <taxon>Bacteria</taxon>
        <taxon>Bacillati</taxon>
        <taxon>Actinomycetota</taxon>
        <taxon>Actinomycetes</taxon>
        <taxon>Micrococcales</taxon>
        <taxon>Micrococcaceae</taxon>
        <taxon>Micrococcus</taxon>
    </lineage>
</organism>
<protein>
    <recommendedName>
        <fullName>Hexaprenyl-diphosphate synthase large subunit ((2E,6E)-farnesyl-diphosphate specific)</fullName>
        <shortName>HexPS</shortName>
        <ecNumber>2.5.1.83</ecNumber>
    </recommendedName>
    <alternativeName>
        <fullName>Hexaprenyl diphosphate synthase</fullName>
    </alternativeName>
    <alternativeName>
        <fullName>Hexaprenyl pyrophosphate synthetase</fullName>
    </alternativeName>
</protein>
<feature type="chain" id="PRO_0000419164" description="Hexaprenyl-diphosphate synthase large subunit ((2E,6E)-farnesyl-diphosphate specific)">
    <location>
        <begin position="1"/>
        <end position="325"/>
    </location>
</feature>
<feature type="binding site" evidence="2">
    <location>
        <position position="45"/>
    </location>
    <ligand>
        <name>isopentenyl diphosphate</name>
        <dbReference type="ChEBI" id="CHEBI:128769"/>
    </ligand>
</feature>
<feature type="binding site" evidence="2">
    <location>
        <position position="48"/>
    </location>
    <ligand>
        <name>isopentenyl diphosphate</name>
        <dbReference type="ChEBI" id="CHEBI:128769"/>
    </ligand>
</feature>
<feature type="binding site" evidence="3">
    <location>
        <position position="77"/>
    </location>
    <ligand>
        <name>isopentenyl diphosphate</name>
        <dbReference type="ChEBI" id="CHEBI:128769"/>
    </ligand>
</feature>
<feature type="binding site">
    <location>
        <position position="84"/>
    </location>
    <ligand>
        <name>all-trans-hexaprenyl diphosphate</name>
        <dbReference type="ChEBI" id="CHEBI:58179"/>
    </ligand>
</feature>
<feature type="binding site" evidence="5 9">
    <location>
        <position position="84"/>
    </location>
    <ligand>
        <name>Mg(2+)</name>
        <dbReference type="ChEBI" id="CHEBI:18420"/>
        <label>1</label>
    </ligand>
</feature>
<feature type="binding site" evidence="5 9">
    <location>
        <position position="84"/>
    </location>
    <ligand>
        <name>Mg(2+)</name>
        <dbReference type="ChEBI" id="CHEBI:18420"/>
        <label>2</label>
    </ligand>
</feature>
<feature type="binding site">
    <location>
        <position position="88"/>
    </location>
    <ligand>
        <name>all-trans-hexaprenyl diphosphate</name>
        <dbReference type="ChEBI" id="CHEBI:58179"/>
    </ligand>
</feature>
<feature type="binding site" evidence="5 9">
    <location>
        <position position="88"/>
    </location>
    <ligand>
        <name>Mg(2+)</name>
        <dbReference type="ChEBI" id="CHEBI:18420"/>
        <label>1</label>
    </ligand>
</feature>
<feature type="binding site" evidence="5 9">
    <location>
        <position position="88"/>
    </location>
    <ligand>
        <name>Mg(2+)</name>
        <dbReference type="ChEBI" id="CHEBI:18420"/>
        <label>2</label>
    </ligand>
</feature>
<feature type="binding site" evidence="1">
    <location>
        <position position="93"/>
    </location>
    <ligand>
        <name>all-trans-hexaprenyl diphosphate</name>
        <dbReference type="ChEBI" id="CHEBI:58179"/>
    </ligand>
</feature>
<feature type="binding site" evidence="2">
    <location>
        <position position="94"/>
    </location>
    <ligand>
        <name>isopentenyl diphosphate</name>
        <dbReference type="ChEBI" id="CHEBI:128769"/>
    </ligand>
</feature>
<feature type="binding site">
    <location>
        <position position="170"/>
    </location>
    <ligand>
        <name>all-trans-hexaprenyl diphosphate</name>
        <dbReference type="ChEBI" id="CHEBI:58179"/>
    </ligand>
</feature>
<feature type="binding site" evidence="1">
    <location>
        <position position="171"/>
    </location>
    <ligand>
        <name>all-trans-hexaprenyl diphosphate</name>
        <dbReference type="ChEBI" id="CHEBI:58179"/>
    </ligand>
</feature>
<feature type="binding site" evidence="1">
    <location>
        <position position="208"/>
    </location>
    <ligand>
        <name>all-trans-hexaprenyl diphosphate</name>
        <dbReference type="ChEBI" id="CHEBI:58179"/>
    </ligand>
</feature>
<feature type="helix" evidence="10">
    <location>
        <begin position="6"/>
        <end position="25"/>
    </location>
</feature>
<feature type="helix" evidence="10">
    <location>
        <begin position="30"/>
        <end position="41"/>
    </location>
</feature>
<feature type="helix" evidence="10">
    <location>
        <begin position="47"/>
        <end position="56"/>
    </location>
</feature>
<feature type="strand" evidence="11">
    <location>
        <begin position="58"/>
        <end position="60"/>
    </location>
</feature>
<feature type="helix" evidence="10">
    <location>
        <begin position="64"/>
        <end position="88"/>
    </location>
</feature>
<feature type="helix" evidence="10">
    <location>
        <begin position="99"/>
        <end position="102"/>
    </location>
</feature>
<feature type="helix" evidence="10">
    <location>
        <begin position="105"/>
        <end position="122"/>
    </location>
</feature>
<feature type="turn" evidence="10">
    <location>
        <begin position="123"/>
        <end position="125"/>
    </location>
</feature>
<feature type="helix" evidence="10">
    <location>
        <begin position="129"/>
        <end position="151"/>
    </location>
</feature>
<feature type="turn" evidence="10">
    <location>
        <begin position="152"/>
        <end position="154"/>
    </location>
</feature>
<feature type="helix" evidence="10">
    <location>
        <begin position="160"/>
        <end position="170"/>
    </location>
</feature>
<feature type="helix" evidence="10">
    <location>
        <begin position="172"/>
        <end position="184"/>
    </location>
</feature>
<feature type="turn" evidence="10">
    <location>
        <begin position="185"/>
        <end position="187"/>
    </location>
</feature>
<feature type="helix" evidence="10">
    <location>
        <begin position="190"/>
        <end position="217"/>
    </location>
</feature>
<feature type="helix" evidence="10">
    <location>
        <begin position="220"/>
        <end position="223"/>
    </location>
</feature>
<feature type="helix" evidence="10">
    <location>
        <begin position="229"/>
        <end position="232"/>
    </location>
</feature>
<feature type="helix" evidence="10">
    <location>
        <begin position="238"/>
        <end position="249"/>
    </location>
</feature>
<feature type="helix" evidence="10">
    <location>
        <begin position="254"/>
        <end position="260"/>
    </location>
</feature>
<feature type="helix" evidence="10">
    <location>
        <begin position="268"/>
        <end position="281"/>
    </location>
</feature>
<feature type="helix" evidence="10">
    <location>
        <begin position="283"/>
        <end position="302"/>
    </location>
</feature>
<feature type="helix" evidence="10">
    <location>
        <begin position="308"/>
        <end position="320"/>
    </location>
</feature>
<feature type="turn" evidence="10">
    <location>
        <begin position="321"/>
        <end position="324"/>
    </location>
</feature>